<keyword id="KW-0004">4Fe-4S</keyword>
<keyword id="KW-0963">Cytoplasm</keyword>
<keyword id="KW-1015">Disulfide bond</keyword>
<keyword id="KW-0408">Iron</keyword>
<keyword id="KW-0411">Iron-sulfur</keyword>
<keyword id="KW-0479">Metal-binding</keyword>
<keyword id="KW-0489">Methyltransferase</keyword>
<keyword id="KW-0698">rRNA processing</keyword>
<keyword id="KW-0949">S-adenosyl-L-methionine</keyword>
<keyword id="KW-0808">Transferase</keyword>
<keyword id="KW-0819">tRNA processing</keyword>
<proteinExistence type="inferred from homology"/>
<comment type="function">
    <text evidence="1">Specifically methylates position 2 of adenine 2503 in 23S rRNA and position 2 of adenine 37 in tRNAs. m2A2503 modification seems to play a crucial role in the proofreading step occurring at the peptidyl transferase center and thus would serve to optimize ribosomal fidelity.</text>
</comment>
<comment type="catalytic activity">
    <reaction evidence="1">
        <text>adenosine(2503) in 23S rRNA + 2 reduced [2Fe-2S]-[ferredoxin] + 2 S-adenosyl-L-methionine = 2-methyladenosine(2503) in 23S rRNA + 5'-deoxyadenosine + L-methionine + 2 oxidized [2Fe-2S]-[ferredoxin] + S-adenosyl-L-homocysteine</text>
        <dbReference type="Rhea" id="RHEA:42916"/>
        <dbReference type="Rhea" id="RHEA-COMP:10000"/>
        <dbReference type="Rhea" id="RHEA-COMP:10001"/>
        <dbReference type="Rhea" id="RHEA-COMP:10152"/>
        <dbReference type="Rhea" id="RHEA-COMP:10282"/>
        <dbReference type="ChEBI" id="CHEBI:17319"/>
        <dbReference type="ChEBI" id="CHEBI:33737"/>
        <dbReference type="ChEBI" id="CHEBI:33738"/>
        <dbReference type="ChEBI" id="CHEBI:57844"/>
        <dbReference type="ChEBI" id="CHEBI:57856"/>
        <dbReference type="ChEBI" id="CHEBI:59789"/>
        <dbReference type="ChEBI" id="CHEBI:74411"/>
        <dbReference type="ChEBI" id="CHEBI:74497"/>
        <dbReference type="EC" id="2.1.1.192"/>
    </reaction>
</comment>
<comment type="catalytic activity">
    <reaction evidence="1">
        <text>adenosine(37) in tRNA + 2 reduced [2Fe-2S]-[ferredoxin] + 2 S-adenosyl-L-methionine = 2-methyladenosine(37) in tRNA + 5'-deoxyadenosine + L-methionine + 2 oxidized [2Fe-2S]-[ferredoxin] + S-adenosyl-L-homocysteine</text>
        <dbReference type="Rhea" id="RHEA:43332"/>
        <dbReference type="Rhea" id="RHEA-COMP:10000"/>
        <dbReference type="Rhea" id="RHEA-COMP:10001"/>
        <dbReference type="Rhea" id="RHEA-COMP:10162"/>
        <dbReference type="Rhea" id="RHEA-COMP:10485"/>
        <dbReference type="ChEBI" id="CHEBI:17319"/>
        <dbReference type="ChEBI" id="CHEBI:33737"/>
        <dbReference type="ChEBI" id="CHEBI:33738"/>
        <dbReference type="ChEBI" id="CHEBI:57844"/>
        <dbReference type="ChEBI" id="CHEBI:57856"/>
        <dbReference type="ChEBI" id="CHEBI:59789"/>
        <dbReference type="ChEBI" id="CHEBI:74411"/>
        <dbReference type="ChEBI" id="CHEBI:74497"/>
        <dbReference type="EC" id="2.1.1.192"/>
    </reaction>
</comment>
<comment type="cofactor">
    <cofactor evidence="1">
        <name>[4Fe-4S] cluster</name>
        <dbReference type="ChEBI" id="CHEBI:49883"/>
    </cofactor>
    <text evidence="1">Binds 1 [4Fe-4S] cluster. The cluster is coordinated with 3 cysteines and an exchangeable S-adenosyl-L-methionine.</text>
</comment>
<comment type="subcellular location">
    <subcellularLocation>
        <location evidence="1">Cytoplasm</location>
    </subcellularLocation>
</comment>
<comment type="miscellaneous">
    <text evidence="1">Reaction proceeds by a ping-pong mechanism involving intermediate methylation of a conserved cysteine residue.</text>
</comment>
<comment type="similarity">
    <text evidence="1">Belongs to the radical SAM superfamily. RlmN family.</text>
</comment>
<protein>
    <recommendedName>
        <fullName evidence="1">Dual-specificity RNA methyltransferase RlmN</fullName>
        <ecNumber evidence="1">2.1.1.192</ecNumber>
    </recommendedName>
    <alternativeName>
        <fullName evidence="1">23S rRNA (adenine(2503)-C(2))-methyltransferase</fullName>
    </alternativeName>
    <alternativeName>
        <fullName evidence="1">23S rRNA m2A2503 methyltransferase</fullName>
    </alternativeName>
    <alternativeName>
        <fullName evidence="1">Ribosomal RNA large subunit methyltransferase N</fullName>
    </alternativeName>
    <alternativeName>
        <fullName evidence="1">tRNA (adenine(37)-C(2))-methyltransferase</fullName>
    </alternativeName>
    <alternativeName>
        <fullName evidence="1">tRNA m2A37 methyltransferase</fullName>
    </alternativeName>
</protein>
<evidence type="ECO:0000255" key="1">
    <source>
        <dbReference type="HAMAP-Rule" id="MF_01849"/>
    </source>
</evidence>
<evidence type="ECO:0000255" key="2">
    <source>
        <dbReference type="PROSITE-ProRule" id="PRU01266"/>
    </source>
</evidence>
<accession>Q0BLY6</accession>
<dbReference type="EC" id="2.1.1.192" evidence="1"/>
<dbReference type="EMBL" id="CP000437">
    <property type="protein sequence ID" value="ABI82898.1"/>
    <property type="molecule type" value="Genomic_DNA"/>
</dbReference>
<dbReference type="RefSeq" id="WP_003015910.1">
    <property type="nucleotide sequence ID" value="NC_017463.1"/>
</dbReference>
<dbReference type="SMR" id="Q0BLY6"/>
<dbReference type="KEGG" id="fth:FTH_1004"/>
<dbReference type="GO" id="GO:0005737">
    <property type="term" value="C:cytoplasm"/>
    <property type="evidence" value="ECO:0007669"/>
    <property type="project" value="UniProtKB-SubCell"/>
</dbReference>
<dbReference type="GO" id="GO:0051539">
    <property type="term" value="F:4 iron, 4 sulfur cluster binding"/>
    <property type="evidence" value="ECO:0007669"/>
    <property type="project" value="UniProtKB-UniRule"/>
</dbReference>
<dbReference type="GO" id="GO:0046872">
    <property type="term" value="F:metal ion binding"/>
    <property type="evidence" value="ECO:0007669"/>
    <property type="project" value="UniProtKB-KW"/>
</dbReference>
<dbReference type="GO" id="GO:0070040">
    <property type="term" value="F:rRNA (adenine(2503)-C2-)-methyltransferase activity"/>
    <property type="evidence" value="ECO:0007669"/>
    <property type="project" value="UniProtKB-UniRule"/>
</dbReference>
<dbReference type="GO" id="GO:0019843">
    <property type="term" value="F:rRNA binding"/>
    <property type="evidence" value="ECO:0007669"/>
    <property type="project" value="UniProtKB-UniRule"/>
</dbReference>
<dbReference type="GO" id="GO:0002935">
    <property type="term" value="F:tRNA (adenine(37)-C2)-methyltransferase activity"/>
    <property type="evidence" value="ECO:0007669"/>
    <property type="project" value="UniProtKB-UniRule"/>
</dbReference>
<dbReference type="GO" id="GO:0000049">
    <property type="term" value="F:tRNA binding"/>
    <property type="evidence" value="ECO:0007669"/>
    <property type="project" value="UniProtKB-UniRule"/>
</dbReference>
<dbReference type="GO" id="GO:0070475">
    <property type="term" value="P:rRNA base methylation"/>
    <property type="evidence" value="ECO:0007669"/>
    <property type="project" value="UniProtKB-UniRule"/>
</dbReference>
<dbReference type="GO" id="GO:0030488">
    <property type="term" value="P:tRNA methylation"/>
    <property type="evidence" value="ECO:0007669"/>
    <property type="project" value="UniProtKB-UniRule"/>
</dbReference>
<dbReference type="CDD" id="cd01335">
    <property type="entry name" value="Radical_SAM"/>
    <property type="match status" value="1"/>
</dbReference>
<dbReference type="FunFam" id="1.10.150.530:FF:000003">
    <property type="entry name" value="Dual-specificity RNA methyltransferase RlmN"/>
    <property type="match status" value="1"/>
</dbReference>
<dbReference type="FunFam" id="3.20.20.70:FF:000008">
    <property type="entry name" value="Dual-specificity RNA methyltransferase RlmN"/>
    <property type="match status" value="1"/>
</dbReference>
<dbReference type="Gene3D" id="1.10.150.530">
    <property type="match status" value="1"/>
</dbReference>
<dbReference type="Gene3D" id="3.20.20.70">
    <property type="entry name" value="Aldolase class I"/>
    <property type="match status" value="1"/>
</dbReference>
<dbReference type="HAMAP" id="MF_01849">
    <property type="entry name" value="RNA_methyltr_RlmN"/>
    <property type="match status" value="1"/>
</dbReference>
<dbReference type="InterPro" id="IPR013785">
    <property type="entry name" value="Aldolase_TIM"/>
</dbReference>
<dbReference type="InterPro" id="IPR006638">
    <property type="entry name" value="Elp3/MiaA/NifB-like_rSAM"/>
</dbReference>
<dbReference type="InterPro" id="IPR040072">
    <property type="entry name" value="Methyltransferase_A"/>
</dbReference>
<dbReference type="InterPro" id="IPR048641">
    <property type="entry name" value="RlmN_N"/>
</dbReference>
<dbReference type="InterPro" id="IPR027492">
    <property type="entry name" value="RNA_MTrfase_RlmN"/>
</dbReference>
<dbReference type="InterPro" id="IPR004383">
    <property type="entry name" value="rRNA_lsu_MTrfase_RlmN/Cfr"/>
</dbReference>
<dbReference type="InterPro" id="IPR007197">
    <property type="entry name" value="rSAM"/>
</dbReference>
<dbReference type="NCBIfam" id="TIGR00048">
    <property type="entry name" value="rRNA_mod_RlmN"/>
    <property type="match status" value="1"/>
</dbReference>
<dbReference type="PANTHER" id="PTHR30544">
    <property type="entry name" value="23S RRNA METHYLTRANSFERASE"/>
    <property type="match status" value="1"/>
</dbReference>
<dbReference type="PANTHER" id="PTHR30544:SF5">
    <property type="entry name" value="RADICAL SAM CORE DOMAIN-CONTAINING PROTEIN"/>
    <property type="match status" value="1"/>
</dbReference>
<dbReference type="Pfam" id="PF04055">
    <property type="entry name" value="Radical_SAM"/>
    <property type="match status" value="1"/>
</dbReference>
<dbReference type="Pfam" id="PF21016">
    <property type="entry name" value="RlmN_N"/>
    <property type="match status" value="1"/>
</dbReference>
<dbReference type="PIRSF" id="PIRSF006004">
    <property type="entry name" value="CHP00048"/>
    <property type="match status" value="1"/>
</dbReference>
<dbReference type="SFLD" id="SFLDF00275">
    <property type="entry name" value="adenosine_C2_methyltransferase"/>
    <property type="match status" value="1"/>
</dbReference>
<dbReference type="SFLD" id="SFLDG01082">
    <property type="entry name" value="B12-binding_domain_containing"/>
    <property type="match status" value="1"/>
</dbReference>
<dbReference type="SFLD" id="SFLDG01062">
    <property type="entry name" value="methyltransferase_(Class_A)"/>
    <property type="match status" value="1"/>
</dbReference>
<dbReference type="SMART" id="SM00729">
    <property type="entry name" value="Elp3"/>
    <property type="match status" value="1"/>
</dbReference>
<dbReference type="SUPFAM" id="SSF102114">
    <property type="entry name" value="Radical SAM enzymes"/>
    <property type="match status" value="1"/>
</dbReference>
<dbReference type="PROSITE" id="PS51918">
    <property type="entry name" value="RADICAL_SAM"/>
    <property type="match status" value="1"/>
</dbReference>
<sequence length="370" mass="41491">MQQDKVNLLGLNQKAIEDFFISIGKKKFHARQVFKWIHKKGVIDFDAMTDLGKNLRHKLKDKAQITIPKVVFSKASKDGTHKWLIDVGGSAVETVFIPEEGRGTLCVSSQIGCTLNCSFCSTGKQGFNRNLSAAEVIAQLWIAARTLSKTDGEHDFTVTNIVMMGMGEPLMNFENVVPAMDIMMDDLAYGLSRRKVTLSTSGVVPRIYDLLEQSGVSLAVSLHTPNDMLRNEIVPINKKYNIDELLEACKLYAQKGPHKHITFEYTLMEEVNDNLSDAEELVALLKSREVPAKINLIPFNPYPGTPYKKPSNNRIHRFKEFLQHNGFVTTVRKTRGDDIDAACGQLAGDVMDKTNRKQRYLKKLGDTNAN</sequence>
<reference key="1">
    <citation type="journal article" date="2006" name="J. Bacteriol.">
        <title>Chromosome rearrangement and diversification of Francisella tularensis revealed by the type B (OSU18) genome sequence.</title>
        <authorList>
            <person name="Petrosino J.F."/>
            <person name="Xiang Q."/>
            <person name="Karpathy S.E."/>
            <person name="Jiang H."/>
            <person name="Yerrapragada S."/>
            <person name="Liu Y."/>
            <person name="Gioia J."/>
            <person name="Hemphill L."/>
            <person name="Gonzalez A."/>
            <person name="Raghavan T.M."/>
            <person name="Uzman A."/>
            <person name="Fox G.E."/>
            <person name="Highlander S."/>
            <person name="Reichard M."/>
            <person name="Morton R.J."/>
            <person name="Clinkenbeard K.D."/>
            <person name="Weinstock G.M."/>
        </authorList>
    </citation>
    <scope>NUCLEOTIDE SEQUENCE [LARGE SCALE GENOMIC DNA]</scope>
    <source>
        <strain>OSU18</strain>
    </source>
</reference>
<organism>
    <name type="scientific">Francisella tularensis subsp. holarctica (strain OSU18)</name>
    <dbReference type="NCBI Taxonomy" id="393011"/>
    <lineage>
        <taxon>Bacteria</taxon>
        <taxon>Pseudomonadati</taxon>
        <taxon>Pseudomonadota</taxon>
        <taxon>Gammaproteobacteria</taxon>
        <taxon>Thiotrichales</taxon>
        <taxon>Francisellaceae</taxon>
        <taxon>Francisella</taxon>
    </lineage>
</organism>
<name>RLMN_FRATO</name>
<gene>
    <name evidence="1" type="primary">rlmN</name>
    <name type="ordered locus">FTH_1004</name>
</gene>
<feature type="chain" id="PRO_0000350182" description="Dual-specificity RNA methyltransferase RlmN">
    <location>
        <begin position="1"/>
        <end position="370"/>
    </location>
</feature>
<feature type="domain" description="Radical SAM core" evidence="2">
    <location>
        <begin position="99"/>
        <end position="337"/>
    </location>
</feature>
<feature type="active site" description="Proton acceptor" evidence="1">
    <location>
        <position position="93"/>
    </location>
</feature>
<feature type="active site" description="S-methylcysteine intermediate" evidence="1">
    <location>
        <position position="343"/>
    </location>
</feature>
<feature type="binding site" evidence="1">
    <location>
        <position position="113"/>
    </location>
    <ligand>
        <name>[4Fe-4S] cluster</name>
        <dbReference type="ChEBI" id="CHEBI:49883"/>
        <note>4Fe-4S-S-AdoMet</note>
    </ligand>
</feature>
<feature type="binding site" evidence="1">
    <location>
        <position position="117"/>
    </location>
    <ligand>
        <name>[4Fe-4S] cluster</name>
        <dbReference type="ChEBI" id="CHEBI:49883"/>
        <note>4Fe-4S-S-AdoMet</note>
    </ligand>
</feature>
<feature type="binding site" evidence="1">
    <location>
        <position position="120"/>
    </location>
    <ligand>
        <name>[4Fe-4S] cluster</name>
        <dbReference type="ChEBI" id="CHEBI:49883"/>
        <note>4Fe-4S-S-AdoMet</note>
    </ligand>
</feature>
<feature type="binding site" evidence="1">
    <location>
        <begin position="167"/>
        <end position="168"/>
    </location>
    <ligand>
        <name>S-adenosyl-L-methionine</name>
        <dbReference type="ChEBI" id="CHEBI:59789"/>
    </ligand>
</feature>
<feature type="binding site" evidence="1">
    <location>
        <position position="199"/>
    </location>
    <ligand>
        <name>S-adenosyl-L-methionine</name>
        <dbReference type="ChEBI" id="CHEBI:59789"/>
    </ligand>
</feature>
<feature type="binding site" evidence="1">
    <location>
        <begin position="221"/>
        <end position="223"/>
    </location>
    <ligand>
        <name>S-adenosyl-L-methionine</name>
        <dbReference type="ChEBI" id="CHEBI:59789"/>
    </ligand>
</feature>
<feature type="binding site" evidence="1">
    <location>
        <position position="300"/>
    </location>
    <ligand>
        <name>S-adenosyl-L-methionine</name>
        <dbReference type="ChEBI" id="CHEBI:59789"/>
    </ligand>
</feature>
<feature type="disulfide bond" description="(transient)" evidence="1">
    <location>
        <begin position="106"/>
        <end position="343"/>
    </location>
</feature>